<dbReference type="EC" id="5.1.3.22"/>
<dbReference type="EMBL" id="U00089">
    <property type="protein sequence ID" value="AAB95998.1"/>
    <property type="molecule type" value="Genomic_DNA"/>
</dbReference>
<dbReference type="PIR" id="S73676">
    <property type="entry name" value="S73676"/>
</dbReference>
<dbReference type="RefSeq" id="NP_110180.1">
    <property type="nucleotide sequence ID" value="NC_000912.1"/>
</dbReference>
<dbReference type="RefSeq" id="WP_010874848.1">
    <property type="nucleotide sequence ID" value="NZ_OU342337.1"/>
</dbReference>
<dbReference type="SMR" id="P75294"/>
<dbReference type="IntAct" id="P75294">
    <property type="interactions" value="3"/>
</dbReference>
<dbReference type="STRING" id="272634.MPN_492"/>
<dbReference type="EnsemblBacteria" id="AAB95998">
    <property type="protein sequence ID" value="AAB95998"/>
    <property type="gene ID" value="MPN_492"/>
</dbReference>
<dbReference type="KEGG" id="mpn:MPN_492"/>
<dbReference type="PATRIC" id="fig|272634.6.peg.532"/>
<dbReference type="HOGENOM" id="CLU_082738_0_0_14"/>
<dbReference type="OrthoDB" id="3185623at2"/>
<dbReference type="BioCyc" id="MPNE272634:G1GJ3-808-MONOMER"/>
<dbReference type="UniPathway" id="UPA00263">
    <property type="reaction ID" value="UER00379"/>
</dbReference>
<dbReference type="Proteomes" id="UP000000808">
    <property type="component" value="Chromosome"/>
</dbReference>
<dbReference type="GO" id="GO:0016861">
    <property type="term" value="F:intramolecular oxidoreductase activity, interconverting aldoses and ketoses"/>
    <property type="evidence" value="ECO:0007669"/>
    <property type="project" value="InterPro"/>
</dbReference>
<dbReference type="GO" id="GO:0034015">
    <property type="term" value="F:L-ribulose-5-phosphate 3-epimerase activity"/>
    <property type="evidence" value="ECO:0007669"/>
    <property type="project" value="UniProtKB-EC"/>
</dbReference>
<dbReference type="GO" id="GO:0019854">
    <property type="term" value="P:L-ascorbic acid catabolic process"/>
    <property type="evidence" value="ECO:0007669"/>
    <property type="project" value="UniProtKB-UniPathway"/>
</dbReference>
<dbReference type="Gene3D" id="3.20.20.150">
    <property type="entry name" value="Divalent-metal-dependent TIM barrel enzymes"/>
    <property type="match status" value="1"/>
</dbReference>
<dbReference type="InterPro" id="IPR004560">
    <property type="entry name" value="L-Ru-5P_3-Epase"/>
</dbReference>
<dbReference type="InterPro" id="IPR050417">
    <property type="entry name" value="Sugar_Epim/Isomerase"/>
</dbReference>
<dbReference type="InterPro" id="IPR036237">
    <property type="entry name" value="Xyl_isomerase-like_sf"/>
</dbReference>
<dbReference type="InterPro" id="IPR013022">
    <property type="entry name" value="Xyl_isomerase-like_TIM-brl"/>
</dbReference>
<dbReference type="NCBIfam" id="TIGR00542">
    <property type="entry name" value="hxl6Piso_put"/>
    <property type="match status" value="1"/>
</dbReference>
<dbReference type="NCBIfam" id="NF009688">
    <property type="entry name" value="PRK13209.1"/>
    <property type="match status" value="1"/>
</dbReference>
<dbReference type="NCBIfam" id="NF009689">
    <property type="entry name" value="PRK13210.1"/>
    <property type="match status" value="1"/>
</dbReference>
<dbReference type="PANTHER" id="PTHR43489">
    <property type="entry name" value="ISOMERASE"/>
    <property type="match status" value="1"/>
</dbReference>
<dbReference type="PANTHER" id="PTHR43489:SF1">
    <property type="entry name" value="L-RIBULOSE-5-PHOSPHATE 3-EPIMERASE SGBU-RELATED"/>
    <property type="match status" value="1"/>
</dbReference>
<dbReference type="Pfam" id="PF01261">
    <property type="entry name" value="AP_endonuc_2"/>
    <property type="match status" value="1"/>
</dbReference>
<dbReference type="SUPFAM" id="SSF51658">
    <property type="entry name" value="Xylose isomerase-like"/>
    <property type="match status" value="1"/>
</dbReference>
<sequence length="305" mass="34888">MLVIHFKPYNNLKMSFTSTENKHLLGVYEKAINNKFAWKDKIAIAKQASFDFIELSIDESDARLQRLDWSDTEINQLHNELQAQTFCLNSMCLSAHRRFPLGSKNKTTVQQGLTIFEKACVLARKLGIRIIQLAAYDVYYEPHDTETERNFITNMRKVAELAQKYAVTIAFEVMDTPFAGTIVRCLNLIKRIGKANILLYPDIGNLSQFSTAVFDEIALGQDKIVGFHFKDTLPKQFKEVPFGTGTAQFEAALKAIHQYVPTVPILIEMWSKNDPAESTVQNVAQLKQAKQFYEQQWDLALKRVK</sequence>
<gene>
    <name type="primary">ulaE</name>
    <name type="synonym">sgaU</name>
    <name type="ordered locus">MPN_492</name>
    <name type="ORF">MP350</name>
</gene>
<evidence type="ECO:0000250" key="1"/>
<evidence type="ECO:0000305" key="2"/>
<proteinExistence type="inferred from homology"/>
<keyword id="KW-0413">Isomerase</keyword>
<keyword id="KW-1185">Reference proteome</keyword>
<reference key="1">
    <citation type="journal article" date="1996" name="Nucleic Acids Res.">
        <title>Complete sequence analysis of the genome of the bacterium Mycoplasma pneumoniae.</title>
        <authorList>
            <person name="Himmelreich R."/>
            <person name="Hilbert H."/>
            <person name="Plagens H."/>
            <person name="Pirkl E."/>
            <person name="Li B.-C."/>
            <person name="Herrmann R."/>
        </authorList>
    </citation>
    <scope>NUCLEOTIDE SEQUENCE [LARGE SCALE GENOMIC DNA]</scope>
    <source>
        <strain>ATCC 29342 / M129 / Subtype 1</strain>
    </source>
</reference>
<organism>
    <name type="scientific">Mycoplasma pneumoniae (strain ATCC 29342 / M129 / Subtype 1)</name>
    <name type="common">Mycoplasmoides pneumoniae</name>
    <dbReference type="NCBI Taxonomy" id="272634"/>
    <lineage>
        <taxon>Bacteria</taxon>
        <taxon>Bacillati</taxon>
        <taxon>Mycoplasmatota</taxon>
        <taxon>Mycoplasmoidales</taxon>
        <taxon>Mycoplasmoidaceae</taxon>
        <taxon>Mycoplasmoides</taxon>
    </lineage>
</organism>
<name>ULAE_MYCPN</name>
<feature type="chain" id="PRO_0000097717" description="Probable L-ribulose-5-phosphate 3-epimerase UlaE">
    <location>
        <begin position="1"/>
        <end position="305"/>
    </location>
</feature>
<protein>
    <recommendedName>
        <fullName>Probable L-ribulose-5-phosphate 3-epimerase UlaE</fullName>
        <ecNumber>5.1.3.22</ecNumber>
    </recommendedName>
    <alternativeName>
        <fullName>L-ascorbate utilization protein E</fullName>
    </alternativeName>
    <alternativeName>
        <fullName>L-xylulose-5-phosphate 3-epimerase</fullName>
    </alternativeName>
</protein>
<comment type="function">
    <text evidence="1">Catalyzes the isomerization of L-xylulose-5-phosphate to L-ribulose-5-phosphate. Is involved in the anaerobic L-ascorbate utilization (By similarity).</text>
</comment>
<comment type="catalytic activity">
    <reaction>
        <text>L-ribulose 5-phosphate = L-xylulose 5-phosphate</text>
        <dbReference type="Rhea" id="RHEA:18497"/>
        <dbReference type="ChEBI" id="CHEBI:57829"/>
        <dbReference type="ChEBI" id="CHEBI:58226"/>
        <dbReference type="EC" id="5.1.3.22"/>
    </reaction>
</comment>
<comment type="pathway">
    <text>Cofactor degradation; L-ascorbate degradation; D-xylulose 5-phosphate from L-ascorbate: step 3/4.</text>
</comment>
<comment type="similarity">
    <text evidence="2">Belongs to the L-ribulose-5-phosphate 3-epimerase family.</text>
</comment>
<accession>P75294</accession>